<dbReference type="EC" id="6.1.1.1" evidence="1"/>
<dbReference type="EMBL" id="CP000016">
    <property type="protein sequence ID" value="AAZ41006.1"/>
    <property type="molecule type" value="Genomic_DNA"/>
</dbReference>
<dbReference type="RefSeq" id="WP_011282915.1">
    <property type="nucleotide sequence ID" value="NC_007292.1"/>
</dbReference>
<dbReference type="SMR" id="Q492T7"/>
<dbReference type="STRING" id="291272.BPEN_382"/>
<dbReference type="KEGG" id="bpn:BPEN_382"/>
<dbReference type="eggNOG" id="COG0162">
    <property type="taxonomic scope" value="Bacteria"/>
</dbReference>
<dbReference type="HOGENOM" id="CLU_024003_0_3_6"/>
<dbReference type="OrthoDB" id="9804243at2"/>
<dbReference type="Proteomes" id="UP000007794">
    <property type="component" value="Chromosome"/>
</dbReference>
<dbReference type="GO" id="GO:0005829">
    <property type="term" value="C:cytosol"/>
    <property type="evidence" value="ECO:0007669"/>
    <property type="project" value="TreeGrafter"/>
</dbReference>
<dbReference type="GO" id="GO:0005524">
    <property type="term" value="F:ATP binding"/>
    <property type="evidence" value="ECO:0007669"/>
    <property type="project" value="UniProtKB-UniRule"/>
</dbReference>
<dbReference type="GO" id="GO:0003723">
    <property type="term" value="F:RNA binding"/>
    <property type="evidence" value="ECO:0007669"/>
    <property type="project" value="UniProtKB-KW"/>
</dbReference>
<dbReference type="GO" id="GO:0004831">
    <property type="term" value="F:tyrosine-tRNA ligase activity"/>
    <property type="evidence" value="ECO:0007669"/>
    <property type="project" value="UniProtKB-UniRule"/>
</dbReference>
<dbReference type="GO" id="GO:0006437">
    <property type="term" value="P:tyrosyl-tRNA aminoacylation"/>
    <property type="evidence" value="ECO:0007669"/>
    <property type="project" value="UniProtKB-UniRule"/>
</dbReference>
<dbReference type="CDD" id="cd00165">
    <property type="entry name" value="S4"/>
    <property type="match status" value="1"/>
</dbReference>
<dbReference type="CDD" id="cd00805">
    <property type="entry name" value="TyrRS_core"/>
    <property type="match status" value="1"/>
</dbReference>
<dbReference type="FunFam" id="1.10.240.10:FF:000001">
    <property type="entry name" value="Tyrosine--tRNA ligase"/>
    <property type="match status" value="1"/>
</dbReference>
<dbReference type="FunFam" id="3.40.50.620:FF:000008">
    <property type="entry name" value="Tyrosine--tRNA ligase"/>
    <property type="match status" value="1"/>
</dbReference>
<dbReference type="Gene3D" id="3.40.50.620">
    <property type="entry name" value="HUPs"/>
    <property type="match status" value="1"/>
</dbReference>
<dbReference type="Gene3D" id="3.10.290.10">
    <property type="entry name" value="RNA-binding S4 domain"/>
    <property type="match status" value="1"/>
</dbReference>
<dbReference type="Gene3D" id="1.10.240.10">
    <property type="entry name" value="Tyrosyl-Transfer RNA Synthetase"/>
    <property type="match status" value="1"/>
</dbReference>
<dbReference type="HAMAP" id="MF_02006">
    <property type="entry name" value="Tyr_tRNA_synth_type1"/>
    <property type="match status" value="1"/>
</dbReference>
<dbReference type="InterPro" id="IPR001412">
    <property type="entry name" value="aa-tRNA-synth_I_CS"/>
</dbReference>
<dbReference type="InterPro" id="IPR002305">
    <property type="entry name" value="aa-tRNA-synth_Ic"/>
</dbReference>
<dbReference type="InterPro" id="IPR014729">
    <property type="entry name" value="Rossmann-like_a/b/a_fold"/>
</dbReference>
<dbReference type="InterPro" id="IPR002942">
    <property type="entry name" value="S4_RNA-bd"/>
</dbReference>
<dbReference type="InterPro" id="IPR036986">
    <property type="entry name" value="S4_RNA-bd_sf"/>
</dbReference>
<dbReference type="InterPro" id="IPR054608">
    <property type="entry name" value="SYY-like_C"/>
</dbReference>
<dbReference type="InterPro" id="IPR002307">
    <property type="entry name" value="Tyr-tRNA-ligase"/>
</dbReference>
<dbReference type="InterPro" id="IPR024088">
    <property type="entry name" value="Tyr-tRNA-ligase_bac-type"/>
</dbReference>
<dbReference type="InterPro" id="IPR024107">
    <property type="entry name" value="Tyr-tRNA-ligase_bac_1"/>
</dbReference>
<dbReference type="NCBIfam" id="TIGR00234">
    <property type="entry name" value="tyrS"/>
    <property type="match status" value="1"/>
</dbReference>
<dbReference type="PANTHER" id="PTHR11766:SF0">
    <property type="entry name" value="TYROSINE--TRNA LIGASE, MITOCHONDRIAL"/>
    <property type="match status" value="1"/>
</dbReference>
<dbReference type="PANTHER" id="PTHR11766">
    <property type="entry name" value="TYROSYL-TRNA SYNTHETASE"/>
    <property type="match status" value="1"/>
</dbReference>
<dbReference type="Pfam" id="PF22421">
    <property type="entry name" value="SYY_C-terminal"/>
    <property type="match status" value="1"/>
</dbReference>
<dbReference type="Pfam" id="PF00579">
    <property type="entry name" value="tRNA-synt_1b"/>
    <property type="match status" value="1"/>
</dbReference>
<dbReference type="PRINTS" id="PR01040">
    <property type="entry name" value="TRNASYNTHTYR"/>
</dbReference>
<dbReference type="SMART" id="SM00363">
    <property type="entry name" value="S4"/>
    <property type="match status" value="1"/>
</dbReference>
<dbReference type="SUPFAM" id="SSF55174">
    <property type="entry name" value="Alpha-L RNA-binding motif"/>
    <property type="match status" value="1"/>
</dbReference>
<dbReference type="SUPFAM" id="SSF52374">
    <property type="entry name" value="Nucleotidylyl transferase"/>
    <property type="match status" value="1"/>
</dbReference>
<dbReference type="PROSITE" id="PS00178">
    <property type="entry name" value="AA_TRNA_LIGASE_I"/>
    <property type="match status" value="1"/>
</dbReference>
<dbReference type="PROSITE" id="PS50889">
    <property type="entry name" value="S4"/>
    <property type="match status" value="1"/>
</dbReference>
<sequence>MNNKNIDIIQLLYERDLIAQITNQEALIKILKSKSITLYCGFDPTSDSLHIGHLVPLLCLRQFQIFGHRPIILLGGGTGLIGDPSFKDSERKLNLIETVQKWIEKIKYQVSLFVDFSHSQYSQACIVNNYDWLSSISLLTFLRDIGKFFSVNKMINKDAIKKRLQKNNYGISYTEFSYNLLQSYDFTYLHKNYNAILQIGGSDQWGNIISGIDLIHRIYKRTTYGLTMPLLTKSDNTKFGKTEKHTIWLDAKKTSPYTFYQYWINTSDEEVYRFLKFFTNIDVDAINTLKKEDKMKNTKPQAQIILAEEITRLVHGKSGLKTAQKITRNLFTGQIHKLTLDDFEQLFQDGIPTVPLKAGITLQQALVESKLVVSRAQARELISSNSITVNSKKQLKTEYIFCATDRLYNRFTLLRRGKKHHCLITWE</sequence>
<protein>
    <recommendedName>
        <fullName evidence="1">Tyrosine--tRNA ligase</fullName>
        <ecNumber evidence="1">6.1.1.1</ecNumber>
    </recommendedName>
    <alternativeName>
        <fullName evidence="1">Tyrosyl-tRNA synthetase</fullName>
        <shortName evidence="1">TyrRS</shortName>
    </alternativeName>
</protein>
<evidence type="ECO:0000255" key="1">
    <source>
        <dbReference type="HAMAP-Rule" id="MF_02006"/>
    </source>
</evidence>
<feature type="chain" id="PRO_0000234685" description="Tyrosine--tRNA ligase">
    <location>
        <begin position="1"/>
        <end position="427"/>
    </location>
</feature>
<feature type="domain" description="S4 RNA-binding" evidence="1">
    <location>
        <begin position="360"/>
        <end position="417"/>
    </location>
</feature>
<feature type="short sequence motif" description="'HIGH' region">
    <location>
        <begin position="44"/>
        <end position="53"/>
    </location>
</feature>
<feature type="short sequence motif" description="'KMSKS' region">
    <location>
        <begin position="238"/>
        <end position="242"/>
    </location>
</feature>
<feature type="binding site" evidence="1">
    <location>
        <position position="39"/>
    </location>
    <ligand>
        <name>L-tyrosine</name>
        <dbReference type="ChEBI" id="CHEBI:58315"/>
    </ligand>
</feature>
<feature type="binding site" evidence="1">
    <location>
        <position position="178"/>
    </location>
    <ligand>
        <name>L-tyrosine</name>
        <dbReference type="ChEBI" id="CHEBI:58315"/>
    </ligand>
</feature>
<feature type="binding site" evidence="1">
    <location>
        <position position="182"/>
    </location>
    <ligand>
        <name>L-tyrosine</name>
        <dbReference type="ChEBI" id="CHEBI:58315"/>
    </ligand>
</feature>
<feature type="binding site" evidence="1">
    <location>
        <position position="241"/>
    </location>
    <ligand>
        <name>ATP</name>
        <dbReference type="ChEBI" id="CHEBI:30616"/>
    </ligand>
</feature>
<proteinExistence type="inferred from homology"/>
<organism>
    <name type="scientific">Blochmanniella pennsylvanica (strain BPEN)</name>
    <dbReference type="NCBI Taxonomy" id="291272"/>
    <lineage>
        <taxon>Bacteria</taxon>
        <taxon>Pseudomonadati</taxon>
        <taxon>Pseudomonadota</taxon>
        <taxon>Gammaproteobacteria</taxon>
        <taxon>Enterobacterales</taxon>
        <taxon>Enterobacteriaceae</taxon>
        <taxon>ant endosymbionts</taxon>
        <taxon>Candidatus Blochmanniella</taxon>
    </lineage>
</organism>
<name>SYY_BLOPB</name>
<gene>
    <name evidence="1" type="primary">tyrS</name>
    <name type="ordered locus">BPEN_382</name>
</gene>
<accession>Q492T7</accession>
<reference key="1">
    <citation type="journal article" date="2005" name="Genome Res.">
        <title>Genome sequence of Blochmannia pennsylvanicus indicates parallel evolutionary trends among bacterial mutualists of insects.</title>
        <authorList>
            <person name="Degnan P.H."/>
            <person name="Lazarus A.B."/>
            <person name="Wernegreen J.J."/>
        </authorList>
    </citation>
    <scope>NUCLEOTIDE SEQUENCE [LARGE SCALE GENOMIC DNA]</scope>
    <source>
        <strain>BPEN</strain>
    </source>
</reference>
<keyword id="KW-0030">Aminoacyl-tRNA synthetase</keyword>
<keyword id="KW-0067">ATP-binding</keyword>
<keyword id="KW-0963">Cytoplasm</keyword>
<keyword id="KW-0436">Ligase</keyword>
<keyword id="KW-0547">Nucleotide-binding</keyword>
<keyword id="KW-0648">Protein biosynthesis</keyword>
<keyword id="KW-1185">Reference proteome</keyword>
<keyword id="KW-0694">RNA-binding</keyword>
<comment type="function">
    <text evidence="1">Catalyzes the attachment of tyrosine to tRNA(Tyr) in a two-step reaction: tyrosine is first activated by ATP to form Tyr-AMP and then transferred to the acceptor end of tRNA(Tyr).</text>
</comment>
<comment type="catalytic activity">
    <reaction evidence="1">
        <text>tRNA(Tyr) + L-tyrosine + ATP = L-tyrosyl-tRNA(Tyr) + AMP + diphosphate + H(+)</text>
        <dbReference type="Rhea" id="RHEA:10220"/>
        <dbReference type="Rhea" id="RHEA-COMP:9706"/>
        <dbReference type="Rhea" id="RHEA-COMP:9707"/>
        <dbReference type="ChEBI" id="CHEBI:15378"/>
        <dbReference type="ChEBI" id="CHEBI:30616"/>
        <dbReference type="ChEBI" id="CHEBI:33019"/>
        <dbReference type="ChEBI" id="CHEBI:58315"/>
        <dbReference type="ChEBI" id="CHEBI:78442"/>
        <dbReference type="ChEBI" id="CHEBI:78536"/>
        <dbReference type="ChEBI" id="CHEBI:456215"/>
        <dbReference type="EC" id="6.1.1.1"/>
    </reaction>
</comment>
<comment type="subunit">
    <text evidence="1">Homodimer.</text>
</comment>
<comment type="subcellular location">
    <subcellularLocation>
        <location evidence="1">Cytoplasm</location>
    </subcellularLocation>
</comment>
<comment type="similarity">
    <text evidence="1">Belongs to the class-I aminoacyl-tRNA synthetase family. TyrS type 1 subfamily.</text>
</comment>